<organism>
    <name type="scientific">Geobacter metallireducens (strain ATCC 53774 / DSM 7210 / GS-15)</name>
    <dbReference type="NCBI Taxonomy" id="269799"/>
    <lineage>
        <taxon>Bacteria</taxon>
        <taxon>Pseudomonadati</taxon>
        <taxon>Thermodesulfobacteriota</taxon>
        <taxon>Desulfuromonadia</taxon>
        <taxon>Geobacterales</taxon>
        <taxon>Geobacteraceae</taxon>
        <taxon>Geobacter</taxon>
    </lineage>
</organism>
<protein>
    <recommendedName>
        <fullName evidence="1">2-C-methyl-D-erythritol 4-phosphate cytidylyltransferase</fullName>
        <ecNumber evidence="1">2.7.7.60</ecNumber>
    </recommendedName>
    <alternativeName>
        <fullName evidence="1">4-diphosphocytidyl-2C-methyl-D-erythritol synthase</fullName>
    </alternativeName>
    <alternativeName>
        <fullName evidence="1">MEP cytidylyltransferase</fullName>
        <shortName evidence="1">MCT</shortName>
    </alternativeName>
</protein>
<feature type="chain" id="PRO_0000237792" description="2-C-methyl-D-erythritol 4-phosphate cytidylyltransferase">
    <location>
        <begin position="1"/>
        <end position="232"/>
    </location>
</feature>
<feature type="site" description="Transition state stabilizer" evidence="1">
    <location>
        <position position="15"/>
    </location>
</feature>
<feature type="site" description="Transition state stabilizer" evidence="1">
    <location>
        <position position="22"/>
    </location>
</feature>
<feature type="site" description="Positions MEP for the nucleophilic attack" evidence="1">
    <location>
        <position position="157"/>
    </location>
</feature>
<feature type="site" description="Positions MEP for the nucleophilic attack" evidence="1">
    <location>
        <position position="213"/>
    </location>
</feature>
<gene>
    <name evidence="1" type="primary">ispD</name>
    <name type="ordered locus">Gmet_0060</name>
</gene>
<evidence type="ECO:0000255" key="1">
    <source>
        <dbReference type="HAMAP-Rule" id="MF_00108"/>
    </source>
</evidence>
<name>ISPD_GEOMG</name>
<reference key="1">
    <citation type="journal article" date="2009" name="BMC Microbiol.">
        <title>The genome sequence of Geobacter metallireducens: features of metabolism, physiology and regulation common and dissimilar to Geobacter sulfurreducens.</title>
        <authorList>
            <person name="Aklujkar M."/>
            <person name="Krushkal J."/>
            <person name="DiBartolo G."/>
            <person name="Lapidus A."/>
            <person name="Land M.L."/>
            <person name="Lovley D.R."/>
        </authorList>
    </citation>
    <scope>NUCLEOTIDE SEQUENCE [LARGE SCALE GENOMIC DNA]</scope>
    <source>
        <strain>ATCC 53774 / DSM 7210 / GS-15</strain>
    </source>
</reference>
<proteinExistence type="inferred from homology"/>
<sequence>MAVFALIPAAGMGKRMGASINKQYLLLGGMPILARTLEVFERSPLVDGIFVVIPADEIPFCREQVVERHGFSKVRSIVAGGAERQQSVLNGLRAMEGTAGEYDVILIHDGVRPFVTEDILGRATATARENDGALVAVPAKDTVKVVEDGIITATPSRETLWLAQTPQAFRYGVIRAAHEVADAERFLGTDDAMLVERLGRQVRIVLGDYRNVKITTPEDMVLAEAFIKEKLP</sequence>
<comment type="function">
    <text evidence="1">Catalyzes the formation of 4-diphosphocytidyl-2-C-methyl-D-erythritol from CTP and 2-C-methyl-D-erythritol 4-phosphate (MEP).</text>
</comment>
<comment type="catalytic activity">
    <reaction evidence="1">
        <text>2-C-methyl-D-erythritol 4-phosphate + CTP + H(+) = 4-CDP-2-C-methyl-D-erythritol + diphosphate</text>
        <dbReference type="Rhea" id="RHEA:13429"/>
        <dbReference type="ChEBI" id="CHEBI:15378"/>
        <dbReference type="ChEBI" id="CHEBI:33019"/>
        <dbReference type="ChEBI" id="CHEBI:37563"/>
        <dbReference type="ChEBI" id="CHEBI:57823"/>
        <dbReference type="ChEBI" id="CHEBI:58262"/>
        <dbReference type="EC" id="2.7.7.60"/>
    </reaction>
</comment>
<comment type="pathway">
    <text evidence="1">Isoprenoid biosynthesis; isopentenyl diphosphate biosynthesis via DXP pathway; isopentenyl diphosphate from 1-deoxy-D-xylulose 5-phosphate: step 2/6.</text>
</comment>
<comment type="similarity">
    <text evidence="1">Belongs to the IspD/TarI cytidylyltransferase family. IspD subfamily.</text>
</comment>
<keyword id="KW-0414">Isoprene biosynthesis</keyword>
<keyword id="KW-0548">Nucleotidyltransferase</keyword>
<keyword id="KW-1185">Reference proteome</keyword>
<keyword id="KW-0808">Transferase</keyword>
<accession>Q39ZL5</accession>
<dbReference type="EC" id="2.7.7.60" evidence="1"/>
<dbReference type="EMBL" id="CP000148">
    <property type="protein sequence ID" value="ABB30309.1"/>
    <property type="molecule type" value="Genomic_DNA"/>
</dbReference>
<dbReference type="RefSeq" id="WP_004514184.1">
    <property type="nucleotide sequence ID" value="NC_007517.1"/>
</dbReference>
<dbReference type="SMR" id="Q39ZL5"/>
<dbReference type="STRING" id="269799.Gmet_0060"/>
<dbReference type="KEGG" id="gme:Gmet_0060"/>
<dbReference type="eggNOG" id="COG1211">
    <property type="taxonomic scope" value="Bacteria"/>
</dbReference>
<dbReference type="HOGENOM" id="CLU_061281_2_2_7"/>
<dbReference type="UniPathway" id="UPA00056">
    <property type="reaction ID" value="UER00093"/>
</dbReference>
<dbReference type="Proteomes" id="UP000007073">
    <property type="component" value="Chromosome"/>
</dbReference>
<dbReference type="GO" id="GO:0050518">
    <property type="term" value="F:2-C-methyl-D-erythritol 4-phosphate cytidylyltransferase activity"/>
    <property type="evidence" value="ECO:0007669"/>
    <property type="project" value="UniProtKB-UniRule"/>
</dbReference>
<dbReference type="GO" id="GO:0019288">
    <property type="term" value="P:isopentenyl diphosphate biosynthetic process, methylerythritol 4-phosphate pathway"/>
    <property type="evidence" value="ECO:0007669"/>
    <property type="project" value="UniProtKB-UniRule"/>
</dbReference>
<dbReference type="CDD" id="cd02516">
    <property type="entry name" value="CDP-ME_synthetase"/>
    <property type="match status" value="1"/>
</dbReference>
<dbReference type="FunFam" id="3.90.550.10:FF:000003">
    <property type="entry name" value="2-C-methyl-D-erythritol 4-phosphate cytidylyltransferase"/>
    <property type="match status" value="1"/>
</dbReference>
<dbReference type="Gene3D" id="3.90.550.10">
    <property type="entry name" value="Spore Coat Polysaccharide Biosynthesis Protein SpsA, Chain A"/>
    <property type="match status" value="1"/>
</dbReference>
<dbReference type="HAMAP" id="MF_00108">
    <property type="entry name" value="IspD"/>
    <property type="match status" value="1"/>
</dbReference>
<dbReference type="InterPro" id="IPR001228">
    <property type="entry name" value="IspD"/>
</dbReference>
<dbReference type="InterPro" id="IPR034683">
    <property type="entry name" value="IspD/TarI"/>
</dbReference>
<dbReference type="InterPro" id="IPR050088">
    <property type="entry name" value="IspD/TarI_cytidylyltransf_bact"/>
</dbReference>
<dbReference type="InterPro" id="IPR018294">
    <property type="entry name" value="ISPD_synthase_CS"/>
</dbReference>
<dbReference type="InterPro" id="IPR029044">
    <property type="entry name" value="Nucleotide-diphossugar_trans"/>
</dbReference>
<dbReference type="NCBIfam" id="TIGR00453">
    <property type="entry name" value="ispD"/>
    <property type="match status" value="1"/>
</dbReference>
<dbReference type="PANTHER" id="PTHR32125">
    <property type="entry name" value="2-C-METHYL-D-ERYTHRITOL 4-PHOSPHATE CYTIDYLYLTRANSFERASE, CHLOROPLASTIC"/>
    <property type="match status" value="1"/>
</dbReference>
<dbReference type="PANTHER" id="PTHR32125:SF4">
    <property type="entry name" value="2-C-METHYL-D-ERYTHRITOL 4-PHOSPHATE CYTIDYLYLTRANSFERASE, CHLOROPLASTIC"/>
    <property type="match status" value="1"/>
</dbReference>
<dbReference type="Pfam" id="PF01128">
    <property type="entry name" value="IspD"/>
    <property type="match status" value="1"/>
</dbReference>
<dbReference type="SUPFAM" id="SSF53448">
    <property type="entry name" value="Nucleotide-diphospho-sugar transferases"/>
    <property type="match status" value="1"/>
</dbReference>
<dbReference type="PROSITE" id="PS01295">
    <property type="entry name" value="ISPD"/>
    <property type="match status" value="1"/>
</dbReference>